<accession>A6QPL2</accession>
<name>FNDC4_BOVIN</name>
<proteinExistence type="evidence at transcript level"/>
<comment type="function">
    <molecule>Soluble FNDC4</molecule>
    <text evidence="1">Has anti-inflammatory properties. In the colon, acts on macrophages to down-regulate inflammation. May suppress osteoclastogenesis and mature osteoclast resorptive function. In white adipose tissue, decreases local inflammation, via interaction with GPR116. Also required for proper systemic glucose tolerance, specifically sensitizing white adipocytes to insulin and promoting glucose uptake. The insulin sensitizing function in adipose tissue is mediated by interaction with ADGRF5/GPR116 and activation of cAMP signaling.</text>
</comment>
<comment type="subcellular location">
    <molecule>Fibronectin type III domain-containing protein 4</molecule>
    <subcellularLocation>
        <location evidence="5">Membrane</location>
        <topology evidence="5">Single-pass type I membrane protein</topology>
    </subcellularLocation>
</comment>
<comment type="subcellular location">
    <molecule>Soluble FNDC4</molecule>
    <subcellularLocation>
        <location evidence="1">Secreted</location>
    </subcellularLocation>
</comment>
<feature type="signal peptide" evidence="2">
    <location>
        <begin position="1"/>
        <end position="40"/>
    </location>
</feature>
<feature type="chain" id="PRO_0000355205" description="Fibronectin type III domain-containing protein 4">
    <location>
        <begin position="41"/>
        <end position="230"/>
    </location>
</feature>
<feature type="chain" id="PRO_0000461428" description="Soluble FNDC4" evidence="1">
    <location>
        <begin position="41"/>
        <end status="unknown"/>
    </location>
</feature>
<feature type="topological domain" description="Extracellular" evidence="2">
    <location>
        <begin position="41"/>
        <end position="163"/>
    </location>
</feature>
<feature type="transmembrane region" description="Helical" evidence="2">
    <location>
        <begin position="164"/>
        <end position="184"/>
    </location>
</feature>
<feature type="topological domain" description="Cytoplasmic" evidence="2">
    <location>
        <begin position="185"/>
        <end position="230"/>
    </location>
</feature>
<feature type="domain" description="Fibronectin type-III" evidence="3">
    <location>
        <begin position="43"/>
        <end position="136"/>
    </location>
</feature>
<feature type="region of interest" description="Disordered" evidence="4">
    <location>
        <begin position="118"/>
        <end position="156"/>
    </location>
</feature>
<feature type="region of interest" description="Disordered" evidence="4">
    <location>
        <begin position="193"/>
        <end position="230"/>
    </location>
</feature>
<feature type="compositionally biased region" description="Basic and acidic residues" evidence="4">
    <location>
        <begin position="193"/>
        <end position="205"/>
    </location>
</feature>
<feature type="glycosylation site" description="N-linked (GlcNAc...) asparagine" evidence="2">
    <location>
        <position position="48"/>
    </location>
</feature>
<feature type="glycosylation site" description="N-linked (GlcNAc...) asparagine" evidence="2">
    <location>
        <position position="143"/>
    </location>
</feature>
<evidence type="ECO:0000250" key="1">
    <source>
        <dbReference type="UniProtKB" id="Q3TR08"/>
    </source>
</evidence>
<evidence type="ECO:0000255" key="2"/>
<evidence type="ECO:0000255" key="3">
    <source>
        <dbReference type="PROSITE-ProRule" id="PRU00316"/>
    </source>
</evidence>
<evidence type="ECO:0000256" key="4">
    <source>
        <dbReference type="SAM" id="MobiDB-lite"/>
    </source>
</evidence>
<evidence type="ECO:0000305" key="5"/>
<keyword id="KW-0325">Glycoprotein</keyword>
<keyword id="KW-0472">Membrane</keyword>
<keyword id="KW-1185">Reference proteome</keyword>
<keyword id="KW-0964">Secreted</keyword>
<keyword id="KW-0732">Signal</keyword>
<keyword id="KW-0812">Transmembrane</keyword>
<keyword id="KW-1133">Transmembrane helix</keyword>
<organism>
    <name type="scientific">Bos taurus</name>
    <name type="common">Bovine</name>
    <dbReference type="NCBI Taxonomy" id="9913"/>
    <lineage>
        <taxon>Eukaryota</taxon>
        <taxon>Metazoa</taxon>
        <taxon>Chordata</taxon>
        <taxon>Craniata</taxon>
        <taxon>Vertebrata</taxon>
        <taxon>Euteleostomi</taxon>
        <taxon>Mammalia</taxon>
        <taxon>Eutheria</taxon>
        <taxon>Laurasiatheria</taxon>
        <taxon>Artiodactyla</taxon>
        <taxon>Ruminantia</taxon>
        <taxon>Pecora</taxon>
        <taxon>Bovidae</taxon>
        <taxon>Bovinae</taxon>
        <taxon>Bos</taxon>
    </lineage>
</organism>
<sequence length="230" mass="24753">MPGCLPADSVGTMASLMPLSPYLSPTVLLLVSCDLGFVRADRPPSPVNVTVTHLRANSATVSWDVPEGNIVIGYSISQQRQNGPGQRVIREVNTTTRACALWGLAEDSDYTVQVRSIGLRGESPPGPRVHFRTLKGSDRLPSNSSSPGDITVEGLDGERPLQTGEVVIIVVVLLMWAAVIGLFCRQYDIIKDNDSNNNPKEKGKGPEQSPQGRPVGTRQKKSPSINTIDV</sequence>
<protein>
    <recommendedName>
        <fullName>Fibronectin type III domain-containing protein 4</fullName>
    </recommendedName>
    <alternativeName>
        <fullName>Fibronectin type III repeat-containing protein 1</fullName>
    </alternativeName>
    <component>
        <recommendedName>
            <fullName>Soluble FNDC4</fullName>
            <shortName>sFNDC4</shortName>
        </recommendedName>
    </component>
</protein>
<gene>
    <name type="primary">FNDC4</name>
    <name type="synonym">FRCP1</name>
</gene>
<reference key="1">
    <citation type="submission" date="2007-07" db="EMBL/GenBank/DDBJ databases">
        <authorList>
            <consortium name="NIH - Mammalian Gene Collection (MGC) project"/>
        </authorList>
    </citation>
    <scope>NUCLEOTIDE SEQUENCE [LARGE SCALE MRNA]</scope>
    <source>
        <strain>Hereford</strain>
        <tissue>Fetal cerebellum</tissue>
    </source>
</reference>
<dbReference type="EMBL" id="BC149374">
    <property type="protein sequence ID" value="AAI49375.1"/>
    <property type="molecule type" value="mRNA"/>
</dbReference>
<dbReference type="RefSeq" id="NP_001095794.1">
    <property type="nucleotide sequence ID" value="NM_001102324.1"/>
</dbReference>
<dbReference type="RefSeq" id="XP_024855009.1">
    <property type="nucleotide sequence ID" value="XM_024999241.2"/>
</dbReference>
<dbReference type="SMR" id="A6QPL2"/>
<dbReference type="FunCoup" id="A6QPL2">
    <property type="interactions" value="135"/>
</dbReference>
<dbReference type="STRING" id="9913.ENSBTAP00000041854"/>
<dbReference type="GlyCosmos" id="A6QPL2">
    <property type="glycosylation" value="2 sites, No reported glycans"/>
</dbReference>
<dbReference type="GlyGen" id="A6QPL2">
    <property type="glycosylation" value="2 sites"/>
</dbReference>
<dbReference type="PaxDb" id="9913-ENSBTAP00000041854"/>
<dbReference type="Ensembl" id="ENSBTAT00000044349.4">
    <property type="protein sequence ID" value="ENSBTAP00000041854.4"/>
    <property type="gene ID" value="ENSBTAG00000018164.6"/>
</dbReference>
<dbReference type="GeneID" id="781806"/>
<dbReference type="KEGG" id="bta:781806"/>
<dbReference type="CTD" id="64838"/>
<dbReference type="VEuPathDB" id="HostDB:ENSBTAG00000018164"/>
<dbReference type="VGNC" id="VGNC:29064">
    <property type="gene designation" value="FNDC4"/>
</dbReference>
<dbReference type="eggNOG" id="ENOG502QQ99">
    <property type="taxonomic scope" value="Eukaryota"/>
</dbReference>
<dbReference type="GeneTree" id="ENSGT00390000004923"/>
<dbReference type="InParanoid" id="A6QPL2"/>
<dbReference type="OMA" id="PMGARQK"/>
<dbReference type="OrthoDB" id="5843172at2759"/>
<dbReference type="Proteomes" id="UP000009136">
    <property type="component" value="Chromosome 11"/>
</dbReference>
<dbReference type="Bgee" id="ENSBTAG00000018164">
    <property type="expression patterns" value="Expressed in diaphragm and 105 other cell types or tissues"/>
</dbReference>
<dbReference type="GO" id="GO:0005783">
    <property type="term" value="C:endoplasmic reticulum"/>
    <property type="evidence" value="ECO:0007669"/>
    <property type="project" value="Ensembl"/>
</dbReference>
<dbReference type="GO" id="GO:0005576">
    <property type="term" value="C:extracellular region"/>
    <property type="evidence" value="ECO:0000318"/>
    <property type="project" value="GO_Central"/>
</dbReference>
<dbReference type="GO" id="GO:0005615">
    <property type="term" value="C:extracellular space"/>
    <property type="evidence" value="ECO:0000250"/>
    <property type="project" value="UniProtKB"/>
</dbReference>
<dbReference type="GO" id="GO:0005886">
    <property type="term" value="C:plasma membrane"/>
    <property type="evidence" value="ECO:0000318"/>
    <property type="project" value="GO_Central"/>
</dbReference>
<dbReference type="GO" id="GO:0050728">
    <property type="term" value="P:negative regulation of inflammatory response"/>
    <property type="evidence" value="ECO:0000250"/>
    <property type="project" value="UniProtKB"/>
</dbReference>
<dbReference type="GO" id="GO:0071559">
    <property type="term" value="P:response to transforming growth factor beta"/>
    <property type="evidence" value="ECO:0007669"/>
    <property type="project" value="Ensembl"/>
</dbReference>
<dbReference type="CDD" id="cd00063">
    <property type="entry name" value="FN3"/>
    <property type="match status" value="1"/>
</dbReference>
<dbReference type="FunFam" id="2.60.40.10:FF:000117">
    <property type="entry name" value="Fibronectin type III domain containing 5"/>
    <property type="match status" value="1"/>
</dbReference>
<dbReference type="Gene3D" id="2.60.40.10">
    <property type="entry name" value="Immunoglobulins"/>
    <property type="match status" value="1"/>
</dbReference>
<dbReference type="InterPro" id="IPR003961">
    <property type="entry name" value="FN3_dom"/>
</dbReference>
<dbReference type="InterPro" id="IPR036116">
    <property type="entry name" value="FN3_sf"/>
</dbReference>
<dbReference type="InterPro" id="IPR052120">
    <property type="entry name" value="FNDC_type_III_4/5"/>
</dbReference>
<dbReference type="InterPro" id="IPR013783">
    <property type="entry name" value="Ig-like_fold"/>
</dbReference>
<dbReference type="PANTHER" id="PTHR14470">
    <property type="entry name" value="FIBRONECTIN TYPE III DOMAIN-CONTAINING PROTEIN"/>
    <property type="match status" value="1"/>
</dbReference>
<dbReference type="PANTHER" id="PTHR14470:SF2">
    <property type="entry name" value="FIBRONECTIN TYPE III DOMAIN-CONTAINING PROTEIN 4"/>
    <property type="match status" value="1"/>
</dbReference>
<dbReference type="Pfam" id="PF00041">
    <property type="entry name" value="fn3"/>
    <property type="match status" value="1"/>
</dbReference>
<dbReference type="SMART" id="SM00060">
    <property type="entry name" value="FN3"/>
    <property type="match status" value="1"/>
</dbReference>
<dbReference type="SUPFAM" id="SSF49265">
    <property type="entry name" value="Fibronectin type III"/>
    <property type="match status" value="1"/>
</dbReference>
<dbReference type="PROSITE" id="PS50853">
    <property type="entry name" value="FN3"/>
    <property type="match status" value="1"/>
</dbReference>